<feature type="chain" id="PRO_0000145214" description="DNA topoisomerase 1B">
    <location>
        <begin position="1"/>
        <end position="314"/>
    </location>
</feature>
<feature type="domain" description="Topo IB-type catalytic" evidence="3">
    <location>
        <begin position="77"/>
        <end position="314"/>
    </location>
</feature>
<feature type="active site" description="O-(3'-phospho-DNA)-tyrosine intermediate" evidence="3 4">
    <location>
        <position position="274"/>
    </location>
</feature>
<feature type="site" description="Involved in religation" evidence="2">
    <location>
        <position position="168"/>
    </location>
</feature>
<reference key="1">
    <citation type="journal article" date="1998" name="Virology">
        <title>The complete genomic sequence of the modified vaccinia Ankara strain: comparison with other orthopoxviruses.</title>
        <authorList>
            <person name="Antoine G."/>
            <person name="Scheiflinger F."/>
            <person name="Dorner F."/>
            <person name="Falkner F.G."/>
        </authorList>
    </citation>
    <scope>NUCLEOTIDE SEQUENCE [LARGE SCALE GENOMIC DNA]</scope>
</reference>
<reference key="2">
    <citation type="submission" date="2004-04" db="EMBL/GenBank/DDBJ databases">
        <authorList>
            <person name="Esposito J.J."/>
            <person name="Frace M."/>
            <person name="Sammons S.A."/>
            <person name="Olsen-Rasmussen M.S."/>
            <person name="Osborne J."/>
            <person name="Khristova M."/>
            <person name="Wohlhueter R.M."/>
        </authorList>
    </citation>
    <scope>NUCLEOTIDE SEQUENCE [LARGE SCALE GENOMIC DNA]</scope>
    <source>
        <strain>Isolate Acambis 3000</strain>
    </source>
</reference>
<name>TOP1_VACCA</name>
<organism>
    <name type="scientific">Vaccinia virus (strain Ankara)</name>
    <name type="common">VACV</name>
    <dbReference type="NCBI Taxonomy" id="126794"/>
    <lineage>
        <taxon>Viruses</taxon>
        <taxon>Varidnaviria</taxon>
        <taxon>Bamfordvirae</taxon>
        <taxon>Nucleocytoviricota</taxon>
        <taxon>Pokkesviricetes</taxon>
        <taxon>Chitovirales</taxon>
        <taxon>Poxviridae</taxon>
        <taxon>Chordopoxvirinae</taxon>
        <taxon>Orthopoxvirus</taxon>
        <taxon>Vaccinia virus</taxon>
    </lineage>
</organism>
<keyword id="KW-0238">DNA-binding</keyword>
<keyword id="KW-0413">Isomerase</keyword>
<keyword id="KW-0426">Late protein</keyword>
<keyword id="KW-0799">Topoisomerase</keyword>
<accession>Q76ZS7</accession>
<dbReference type="EC" id="5.6.2.1" evidence="4"/>
<dbReference type="EMBL" id="U94848">
    <property type="protein sequence ID" value="AAB96509.1"/>
    <property type="molecule type" value="Genomic_DNA"/>
</dbReference>
<dbReference type="EMBL" id="AY603355">
    <property type="protein sequence ID" value="AAT10494.1"/>
    <property type="molecule type" value="Genomic_DNA"/>
</dbReference>
<dbReference type="SMR" id="Q76ZS7"/>
<dbReference type="DNASU" id="3707560"/>
<dbReference type="KEGG" id="vg:3707560"/>
<dbReference type="Proteomes" id="UP000159908">
    <property type="component" value="Segment"/>
</dbReference>
<dbReference type="Proteomes" id="UP000172909">
    <property type="component" value="Segment"/>
</dbReference>
<dbReference type="GO" id="GO:0003677">
    <property type="term" value="F:DNA binding"/>
    <property type="evidence" value="ECO:0007669"/>
    <property type="project" value="UniProtKB-KW"/>
</dbReference>
<dbReference type="GO" id="GO:0003917">
    <property type="term" value="F:DNA topoisomerase type I (single strand cut, ATP-independent) activity"/>
    <property type="evidence" value="ECO:0007669"/>
    <property type="project" value="UniProtKB-EC"/>
</dbReference>
<dbReference type="GO" id="GO:0006265">
    <property type="term" value="P:DNA topological change"/>
    <property type="evidence" value="ECO:0007669"/>
    <property type="project" value="InterPro"/>
</dbReference>
<dbReference type="CDD" id="cd00659">
    <property type="entry name" value="Topo_IB_C"/>
    <property type="match status" value="1"/>
</dbReference>
<dbReference type="Gene3D" id="3.30.66.10">
    <property type="entry name" value="DNA topoisomerase I domain"/>
    <property type="match status" value="1"/>
</dbReference>
<dbReference type="Gene3D" id="3.90.15.10">
    <property type="entry name" value="Topoisomerase I, Chain A, domain 3"/>
    <property type="match status" value="1"/>
</dbReference>
<dbReference type="InterPro" id="IPR011010">
    <property type="entry name" value="DNA_brk_join_enz"/>
</dbReference>
<dbReference type="InterPro" id="IPR035447">
    <property type="entry name" value="DNA_topo_I_N_sf"/>
</dbReference>
<dbReference type="InterPro" id="IPR001631">
    <property type="entry name" value="TopoI"/>
</dbReference>
<dbReference type="InterPro" id="IPR014711">
    <property type="entry name" value="TopoI_cat_a-hlx-sub_euk"/>
</dbReference>
<dbReference type="InterPro" id="IPR013500">
    <property type="entry name" value="TopoI_cat_euk"/>
</dbReference>
<dbReference type="InterPro" id="IPR015346">
    <property type="entry name" value="TopoI_N_vir"/>
</dbReference>
<dbReference type="InterPro" id="IPR018521">
    <property type="entry name" value="TopoIB_AS"/>
</dbReference>
<dbReference type="Pfam" id="PF01028">
    <property type="entry name" value="Topoisom_I"/>
    <property type="match status" value="1"/>
</dbReference>
<dbReference type="Pfam" id="PF09266">
    <property type="entry name" value="VirDNA-topo-I_N"/>
    <property type="match status" value="1"/>
</dbReference>
<dbReference type="PRINTS" id="PR00416">
    <property type="entry name" value="EUTPISMRASEI"/>
</dbReference>
<dbReference type="SUPFAM" id="SSF56349">
    <property type="entry name" value="DNA breaking-rejoining enzymes"/>
    <property type="match status" value="1"/>
</dbReference>
<dbReference type="SUPFAM" id="SSF55869">
    <property type="entry name" value="DNA topoisomerase I domain"/>
    <property type="match status" value="1"/>
</dbReference>
<dbReference type="PROSITE" id="PS00176">
    <property type="entry name" value="TOPO_IB_1"/>
    <property type="match status" value="1"/>
</dbReference>
<dbReference type="PROSITE" id="PS52038">
    <property type="entry name" value="TOPO_IB_2"/>
    <property type="match status" value="1"/>
</dbReference>
<organismHost>
    <name type="scientific">Homo sapiens</name>
    <name type="common">Human</name>
    <dbReference type="NCBI Taxonomy" id="9606"/>
</organismHost>
<comment type="function">
    <text evidence="1">Releases the supercoiling and torsional tension of DNA introduced during the DNA replication and transcription by transiently cleaving and rejoining one strand of the DNA duplex. Introduces a single-strand break via transesterification at the specific target site 5'-[CT]CCTTp site in duplex DNA. The scissile phosphodiester is attacked by the catalytic tyrosine of the enzyme, resulting in the formation of a DNA-(3'-phosphotyrosyl)-enzyme intermediate and the expulsion of a 5'-OH DNA strand. The free DNA strand then undergoes passage around the unbroken strand thus removing DNA supercoils. Finally, in the religation step, the DNA 5'-OH attacks the covalent intermediate to expel the active-site tyrosine and restore the DNA phosphodiester backbone (By similarity).</text>
</comment>
<comment type="catalytic activity">
    <reaction evidence="4">
        <text>ATP-independent breakage of single-stranded DNA, followed by passage and rejoining.</text>
        <dbReference type="EC" id="5.6.2.1"/>
    </reaction>
</comment>
<comment type="induction">
    <text>Expressed in the late phase of the viral replicative cycle.</text>
</comment>
<comment type="similarity">
    <text evidence="5">Belongs to the type IB topoisomerase family.</text>
</comment>
<gene>
    <name type="primary">TOP1</name>
    <name type="ordered locus">MVA096R</name>
    <name type="ordered locus">ACAM3000_MVA_096</name>
</gene>
<protein>
    <recommendedName>
        <fullName>DNA topoisomerase 1B</fullName>
        <shortName>TopIB</shortName>
        <ecNumber evidence="4">5.6.2.1</ecNumber>
    </recommendedName>
    <alternativeName>
        <fullName>DNA topoisomerase I</fullName>
    </alternativeName>
    <alternativeName>
        <fullName>Late protein H6</fullName>
    </alternativeName>
</protein>
<sequence length="314" mass="36666">MRALFYKDGKLFTDNNFLNPVSDDNPAYEVLQHVKIPTHLTDVVVYEQTWEEALTRLIFVGSDSKGRRQYFYGKMHVQNRNAKRDRIFVRVYNVMKRINCFINKNIKKSSTDSNYQLAVFMLMETMFFIRFGKMKYLKENETVGLLTLKNKHIEISPDEIVIKFVGKDKVSHEFVVHKSNRLYKPLLKLTDDSSPEEFLFNKLSERKVYECIKQFGIRIKDLRTYGVNYTFLYNFWTNVKSISPLPSPKKLIALTIKQTAEVVGHTPSISKRAYMATTILEMVKDKNFLDVVSKTTFDEFLSIVVDHVKSSTDG</sequence>
<evidence type="ECO:0000250" key="1"/>
<evidence type="ECO:0000250" key="2">
    <source>
        <dbReference type="UniProtKB" id="P32989"/>
    </source>
</evidence>
<evidence type="ECO:0000255" key="3">
    <source>
        <dbReference type="PROSITE-ProRule" id="PRU01382"/>
    </source>
</evidence>
<evidence type="ECO:0000255" key="4">
    <source>
        <dbReference type="PROSITE-ProRule" id="PRU10130"/>
    </source>
</evidence>
<evidence type="ECO:0000305" key="5"/>
<proteinExistence type="evidence at transcript level"/>